<protein>
    <recommendedName>
        <fullName>Putative S-adenosyl-L-methionine-dependent methyltransferase Mflv_5023</fullName>
        <ecNumber>2.1.1.-</ecNumber>
    </recommendedName>
</protein>
<name>Y5023_MYCGI</name>
<proteinExistence type="inferred from homology"/>
<evidence type="ECO:0000250" key="1"/>
<evidence type="ECO:0000256" key="2">
    <source>
        <dbReference type="SAM" id="MobiDB-lite"/>
    </source>
</evidence>
<evidence type="ECO:0000305" key="3"/>
<gene>
    <name type="ordered locus">Mflv_5023</name>
</gene>
<organism>
    <name type="scientific">Mycolicibacterium gilvum (strain PYR-GCK)</name>
    <name type="common">Mycobacterium gilvum (strain PYR-GCK)</name>
    <dbReference type="NCBI Taxonomy" id="350054"/>
    <lineage>
        <taxon>Bacteria</taxon>
        <taxon>Bacillati</taxon>
        <taxon>Actinomycetota</taxon>
        <taxon>Actinomycetes</taxon>
        <taxon>Mycobacteriales</taxon>
        <taxon>Mycobacteriaceae</taxon>
        <taxon>Mycolicibacterium</taxon>
    </lineage>
</organism>
<sequence>MPRTENDTWDLASSVGATATMVAAARAVATRAEDPVIDDPYAEPLVRAVGIDFFAKLASGELTPEDLDVSGDESPVGMSRFADGMAARTRFFDDFFTDACAAGVRQAVILASGLDARGYRLTWPEGMTLFEIDQPEVIEFKRTTLAGLGATPSTHLATVAIDLREDWPTALRDAGFDPSVPTAWIAEGLLGYLPPDAQDRLLDTIGELSASGSRLAVESVPSQQSADQDEMREKMKDSTDRWRSHGFDLDFSELVFLGERANVPDYLRERGWAVTATPTNDLLTRYGLAPLDTDEGFAEVVYVNAAR</sequence>
<accession>A4TED9</accession>
<reference key="1">
    <citation type="submission" date="2007-04" db="EMBL/GenBank/DDBJ databases">
        <title>Complete sequence of chromosome of Mycobacterium gilvum PYR-GCK.</title>
        <authorList>
            <consortium name="US DOE Joint Genome Institute"/>
            <person name="Copeland A."/>
            <person name="Lucas S."/>
            <person name="Lapidus A."/>
            <person name="Barry K."/>
            <person name="Detter J.C."/>
            <person name="Glavina del Rio T."/>
            <person name="Hammon N."/>
            <person name="Israni S."/>
            <person name="Dalin E."/>
            <person name="Tice H."/>
            <person name="Pitluck S."/>
            <person name="Chain P."/>
            <person name="Malfatti S."/>
            <person name="Shin M."/>
            <person name="Vergez L."/>
            <person name="Schmutz J."/>
            <person name="Larimer F."/>
            <person name="Land M."/>
            <person name="Hauser L."/>
            <person name="Kyrpides N."/>
            <person name="Mikhailova N."/>
            <person name="Miller C."/>
            <person name="Richardson P."/>
        </authorList>
    </citation>
    <scope>NUCLEOTIDE SEQUENCE [LARGE SCALE GENOMIC DNA]</scope>
    <source>
        <strain>PYR-GCK</strain>
    </source>
</reference>
<dbReference type="EC" id="2.1.1.-"/>
<dbReference type="EMBL" id="CP000656">
    <property type="protein sequence ID" value="ABP47489.1"/>
    <property type="molecule type" value="Genomic_DNA"/>
</dbReference>
<dbReference type="SMR" id="A4TED9"/>
<dbReference type="STRING" id="350054.Mflv_5023"/>
<dbReference type="KEGG" id="mgi:Mflv_5023"/>
<dbReference type="eggNOG" id="COG3315">
    <property type="taxonomic scope" value="Bacteria"/>
</dbReference>
<dbReference type="HOGENOM" id="CLU_056160_2_1_11"/>
<dbReference type="OrthoDB" id="9806164at2"/>
<dbReference type="GO" id="GO:0008168">
    <property type="term" value="F:methyltransferase activity"/>
    <property type="evidence" value="ECO:0007669"/>
    <property type="project" value="UniProtKB-KW"/>
</dbReference>
<dbReference type="GO" id="GO:0032259">
    <property type="term" value="P:methylation"/>
    <property type="evidence" value="ECO:0007669"/>
    <property type="project" value="UniProtKB-KW"/>
</dbReference>
<dbReference type="FunFam" id="3.40.50.150:FF:000152">
    <property type="entry name" value="S-adenosyl-L-methionine-dependent methyltransferase"/>
    <property type="match status" value="1"/>
</dbReference>
<dbReference type="Gene3D" id="3.40.50.150">
    <property type="entry name" value="Vaccinia Virus protein VP39"/>
    <property type="match status" value="1"/>
</dbReference>
<dbReference type="InterPro" id="IPR007213">
    <property type="entry name" value="Ppm1/Ppm2/Tcmp"/>
</dbReference>
<dbReference type="InterPro" id="IPR029063">
    <property type="entry name" value="SAM-dependent_MTases_sf"/>
</dbReference>
<dbReference type="InterPro" id="IPR011610">
    <property type="entry name" value="SAM_mthyl_Trfase_ML2640-like"/>
</dbReference>
<dbReference type="NCBIfam" id="TIGR00027">
    <property type="entry name" value="mthyl_TIGR00027"/>
    <property type="match status" value="1"/>
</dbReference>
<dbReference type="PANTHER" id="PTHR43619">
    <property type="entry name" value="S-ADENOSYL-L-METHIONINE-DEPENDENT METHYLTRANSFERASE YKTD-RELATED"/>
    <property type="match status" value="1"/>
</dbReference>
<dbReference type="PANTHER" id="PTHR43619:SF2">
    <property type="entry name" value="S-ADENOSYL-L-METHIONINE-DEPENDENT METHYLTRANSFERASES SUPERFAMILY PROTEIN"/>
    <property type="match status" value="1"/>
</dbReference>
<dbReference type="Pfam" id="PF04072">
    <property type="entry name" value="LCM"/>
    <property type="match status" value="1"/>
</dbReference>
<dbReference type="SUPFAM" id="SSF53335">
    <property type="entry name" value="S-adenosyl-L-methionine-dependent methyltransferases"/>
    <property type="match status" value="1"/>
</dbReference>
<keyword id="KW-0489">Methyltransferase</keyword>
<keyword id="KW-0949">S-adenosyl-L-methionine</keyword>
<keyword id="KW-0808">Transferase</keyword>
<comment type="function">
    <text evidence="1">Exhibits S-adenosyl-L-methionine-dependent methyltransferase activity.</text>
</comment>
<comment type="similarity">
    <text evidence="3">Belongs to the UPF0677 family.</text>
</comment>
<feature type="chain" id="PRO_0000361155" description="Putative S-adenosyl-L-methionine-dependent methyltransferase Mflv_5023">
    <location>
        <begin position="1"/>
        <end position="307"/>
    </location>
</feature>
<feature type="region of interest" description="Disordered" evidence="2">
    <location>
        <begin position="213"/>
        <end position="234"/>
    </location>
</feature>
<feature type="binding site" evidence="1">
    <location>
        <position position="133"/>
    </location>
    <ligand>
        <name>S-adenosyl-L-methionine</name>
        <dbReference type="ChEBI" id="CHEBI:59789"/>
    </ligand>
</feature>
<feature type="binding site" evidence="1">
    <location>
        <begin position="162"/>
        <end position="163"/>
    </location>
    <ligand>
        <name>S-adenosyl-L-methionine</name>
        <dbReference type="ChEBI" id="CHEBI:59789"/>
    </ligand>
</feature>